<name>PNP_BACC7</name>
<evidence type="ECO:0000255" key="1">
    <source>
        <dbReference type="HAMAP-Rule" id="MF_01595"/>
    </source>
</evidence>
<keyword id="KW-0963">Cytoplasm</keyword>
<keyword id="KW-0460">Magnesium</keyword>
<keyword id="KW-0479">Metal-binding</keyword>
<keyword id="KW-0548">Nucleotidyltransferase</keyword>
<keyword id="KW-0694">RNA-binding</keyword>
<keyword id="KW-0808">Transferase</keyword>
<proteinExistence type="inferred from homology"/>
<gene>
    <name evidence="1" type="primary">pnp</name>
    <name type="ordered locus">BCAH187_A3854</name>
</gene>
<protein>
    <recommendedName>
        <fullName evidence="1">Polyribonucleotide nucleotidyltransferase</fullName>
        <ecNumber evidence="1">2.7.7.8</ecNumber>
    </recommendedName>
    <alternativeName>
        <fullName evidence="1">Polynucleotide phosphorylase</fullName>
        <shortName evidence="1">PNPase</shortName>
    </alternativeName>
</protein>
<dbReference type="EC" id="2.7.7.8" evidence="1"/>
<dbReference type="EMBL" id="CP001177">
    <property type="protein sequence ID" value="ACJ80765.1"/>
    <property type="molecule type" value="Genomic_DNA"/>
</dbReference>
<dbReference type="SMR" id="B7HLE0"/>
<dbReference type="KEGG" id="bcr:BCAH187_A3854"/>
<dbReference type="HOGENOM" id="CLU_004217_2_2_9"/>
<dbReference type="Proteomes" id="UP000002214">
    <property type="component" value="Chromosome"/>
</dbReference>
<dbReference type="GO" id="GO:0005829">
    <property type="term" value="C:cytosol"/>
    <property type="evidence" value="ECO:0007669"/>
    <property type="project" value="TreeGrafter"/>
</dbReference>
<dbReference type="GO" id="GO:0000175">
    <property type="term" value="F:3'-5'-RNA exonuclease activity"/>
    <property type="evidence" value="ECO:0007669"/>
    <property type="project" value="TreeGrafter"/>
</dbReference>
<dbReference type="GO" id="GO:0000287">
    <property type="term" value="F:magnesium ion binding"/>
    <property type="evidence" value="ECO:0007669"/>
    <property type="project" value="UniProtKB-UniRule"/>
</dbReference>
<dbReference type="GO" id="GO:0004654">
    <property type="term" value="F:polyribonucleotide nucleotidyltransferase activity"/>
    <property type="evidence" value="ECO:0007669"/>
    <property type="project" value="UniProtKB-UniRule"/>
</dbReference>
<dbReference type="GO" id="GO:0003723">
    <property type="term" value="F:RNA binding"/>
    <property type="evidence" value="ECO:0007669"/>
    <property type="project" value="UniProtKB-UniRule"/>
</dbReference>
<dbReference type="GO" id="GO:0006402">
    <property type="term" value="P:mRNA catabolic process"/>
    <property type="evidence" value="ECO:0007669"/>
    <property type="project" value="UniProtKB-UniRule"/>
</dbReference>
<dbReference type="GO" id="GO:0006396">
    <property type="term" value="P:RNA processing"/>
    <property type="evidence" value="ECO:0007669"/>
    <property type="project" value="InterPro"/>
</dbReference>
<dbReference type="CDD" id="cd02393">
    <property type="entry name" value="KH-I_PNPase"/>
    <property type="match status" value="1"/>
</dbReference>
<dbReference type="CDD" id="cd11363">
    <property type="entry name" value="RNase_PH_PNPase_1"/>
    <property type="match status" value="1"/>
</dbReference>
<dbReference type="CDD" id="cd11364">
    <property type="entry name" value="RNase_PH_PNPase_2"/>
    <property type="match status" value="1"/>
</dbReference>
<dbReference type="CDD" id="cd04472">
    <property type="entry name" value="S1_PNPase"/>
    <property type="match status" value="1"/>
</dbReference>
<dbReference type="FunFam" id="2.40.50.140:FF:000023">
    <property type="entry name" value="Polyribonucleotide nucleotidyltransferase"/>
    <property type="match status" value="1"/>
</dbReference>
<dbReference type="FunFam" id="3.30.1370.10:FF:000001">
    <property type="entry name" value="Polyribonucleotide nucleotidyltransferase"/>
    <property type="match status" value="1"/>
</dbReference>
<dbReference type="FunFam" id="3.30.230.70:FF:000001">
    <property type="entry name" value="Polyribonucleotide nucleotidyltransferase"/>
    <property type="match status" value="1"/>
</dbReference>
<dbReference type="FunFam" id="3.30.230.70:FF:000002">
    <property type="entry name" value="Polyribonucleotide nucleotidyltransferase"/>
    <property type="match status" value="1"/>
</dbReference>
<dbReference type="Gene3D" id="3.30.230.70">
    <property type="entry name" value="GHMP Kinase, N-terminal domain"/>
    <property type="match status" value="2"/>
</dbReference>
<dbReference type="Gene3D" id="3.30.1370.10">
    <property type="entry name" value="K Homology domain, type 1"/>
    <property type="match status" value="1"/>
</dbReference>
<dbReference type="Gene3D" id="2.40.50.140">
    <property type="entry name" value="Nucleic acid-binding proteins"/>
    <property type="match status" value="1"/>
</dbReference>
<dbReference type="HAMAP" id="MF_01595">
    <property type="entry name" value="PNPase"/>
    <property type="match status" value="1"/>
</dbReference>
<dbReference type="InterPro" id="IPR001247">
    <property type="entry name" value="ExoRNase_PH_dom1"/>
</dbReference>
<dbReference type="InterPro" id="IPR015847">
    <property type="entry name" value="ExoRNase_PH_dom2"/>
</dbReference>
<dbReference type="InterPro" id="IPR036345">
    <property type="entry name" value="ExoRNase_PH_dom2_sf"/>
</dbReference>
<dbReference type="InterPro" id="IPR004087">
    <property type="entry name" value="KH_dom"/>
</dbReference>
<dbReference type="InterPro" id="IPR004088">
    <property type="entry name" value="KH_dom_type_1"/>
</dbReference>
<dbReference type="InterPro" id="IPR036612">
    <property type="entry name" value="KH_dom_type_1_sf"/>
</dbReference>
<dbReference type="InterPro" id="IPR012340">
    <property type="entry name" value="NA-bd_OB-fold"/>
</dbReference>
<dbReference type="InterPro" id="IPR012162">
    <property type="entry name" value="PNPase"/>
</dbReference>
<dbReference type="InterPro" id="IPR027408">
    <property type="entry name" value="PNPase/RNase_PH_dom_sf"/>
</dbReference>
<dbReference type="InterPro" id="IPR015848">
    <property type="entry name" value="PNPase_PH_RNA-bd_bac/org-type"/>
</dbReference>
<dbReference type="InterPro" id="IPR020568">
    <property type="entry name" value="Ribosomal_Su5_D2-typ_SF"/>
</dbReference>
<dbReference type="InterPro" id="IPR003029">
    <property type="entry name" value="S1_domain"/>
</dbReference>
<dbReference type="NCBIfam" id="TIGR03591">
    <property type="entry name" value="polynuc_phos"/>
    <property type="match status" value="1"/>
</dbReference>
<dbReference type="NCBIfam" id="NF008805">
    <property type="entry name" value="PRK11824.1"/>
    <property type="match status" value="1"/>
</dbReference>
<dbReference type="PANTHER" id="PTHR11252">
    <property type="entry name" value="POLYRIBONUCLEOTIDE NUCLEOTIDYLTRANSFERASE"/>
    <property type="match status" value="1"/>
</dbReference>
<dbReference type="PANTHER" id="PTHR11252:SF0">
    <property type="entry name" value="POLYRIBONUCLEOTIDE NUCLEOTIDYLTRANSFERASE 1, MITOCHONDRIAL"/>
    <property type="match status" value="1"/>
</dbReference>
<dbReference type="Pfam" id="PF00013">
    <property type="entry name" value="KH_1"/>
    <property type="match status" value="1"/>
</dbReference>
<dbReference type="Pfam" id="PF03726">
    <property type="entry name" value="PNPase"/>
    <property type="match status" value="1"/>
</dbReference>
<dbReference type="Pfam" id="PF01138">
    <property type="entry name" value="RNase_PH"/>
    <property type="match status" value="2"/>
</dbReference>
<dbReference type="Pfam" id="PF03725">
    <property type="entry name" value="RNase_PH_C"/>
    <property type="match status" value="2"/>
</dbReference>
<dbReference type="Pfam" id="PF00575">
    <property type="entry name" value="S1"/>
    <property type="match status" value="1"/>
</dbReference>
<dbReference type="PIRSF" id="PIRSF005499">
    <property type="entry name" value="PNPase"/>
    <property type="match status" value="1"/>
</dbReference>
<dbReference type="SMART" id="SM00322">
    <property type="entry name" value="KH"/>
    <property type="match status" value="1"/>
</dbReference>
<dbReference type="SMART" id="SM00316">
    <property type="entry name" value="S1"/>
    <property type="match status" value="1"/>
</dbReference>
<dbReference type="SUPFAM" id="SSF54791">
    <property type="entry name" value="Eukaryotic type KH-domain (KH-domain type I)"/>
    <property type="match status" value="1"/>
</dbReference>
<dbReference type="SUPFAM" id="SSF50249">
    <property type="entry name" value="Nucleic acid-binding proteins"/>
    <property type="match status" value="1"/>
</dbReference>
<dbReference type="SUPFAM" id="SSF55666">
    <property type="entry name" value="Ribonuclease PH domain 2-like"/>
    <property type="match status" value="2"/>
</dbReference>
<dbReference type="SUPFAM" id="SSF54211">
    <property type="entry name" value="Ribosomal protein S5 domain 2-like"/>
    <property type="match status" value="2"/>
</dbReference>
<dbReference type="PROSITE" id="PS50084">
    <property type="entry name" value="KH_TYPE_1"/>
    <property type="match status" value="1"/>
</dbReference>
<dbReference type="PROSITE" id="PS50126">
    <property type="entry name" value="S1"/>
    <property type="match status" value="1"/>
</dbReference>
<organism>
    <name type="scientific">Bacillus cereus (strain AH187)</name>
    <dbReference type="NCBI Taxonomy" id="405534"/>
    <lineage>
        <taxon>Bacteria</taxon>
        <taxon>Bacillati</taxon>
        <taxon>Bacillota</taxon>
        <taxon>Bacilli</taxon>
        <taxon>Bacillales</taxon>
        <taxon>Bacillaceae</taxon>
        <taxon>Bacillus</taxon>
        <taxon>Bacillus cereus group</taxon>
    </lineage>
</organism>
<sequence length="712" mass="78214">MSQEKQVFSIDLAGRQLTVETGQLAKQANGAVLVRYGDTAVLSTATASKEAKNVDFFPLTVNYEERLYAVGKIPGGFIKREGRPSEKAILASRLIDRPIRPLFADGFRNEVQVVSIVMSVDQDCSSEMAAMLGSSLALSISDIPFEGPIAGATVGRINGEFVINPTVEQQEQSDIHLVVAGTKDAINMVEAGADQVPEETMLEAIMFGHDEIKRLIAFQEEIVQAVGKEKSEVKLYEVDADLNQAVREMAEKDMHSAIQVHEKHAREDAINEVKKRVIEHYEAQEADADTLGQVNEILYKIVKEEVRRLITVEKIRPDGRKGDEIRPLASEVGILSRTHGSGLFTRGQTQALSICTLGALGDVQILDGLGVEESKRFMHHYNFPSFSVGETRPMRGPGRREIGHGALGERALEPVIPSEKDFPYTVRLVSEVLESNGSTSQASICGSTLAMMDAGVPLKAPVAGIAMGLVKSGEHYTILTDIQGMEDHLGDMDFKVAGTAHGVTALQMDIKIDGLSREILEEALQQAKVGRMHILDHMLSVIAEPRTELSAYAPKIITMTINPDKIRDVIGPSGKQINKIIEETGVKIDIEQDGTVFISSINQEMNDKAKKIIEDIVREVQVGEIYEGKVKRVEKFGAFVELFSGKDGLVHISELALERVGKVEDVVKIGDVITVKVIEIDKQGRVNLSRKVLLKEEQEKEAAKEENKQEQQ</sequence>
<comment type="function">
    <text evidence="1">Involved in mRNA degradation. Catalyzes the phosphorolysis of single-stranded polyribonucleotides processively in the 3'- to 5'-direction.</text>
</comment>
<comment type="catalytic activity">
    <reaction evidence="1">
        <text>RNA(n+1) + phosphate = RNA(n) + a ribonucleoside 5'-diphosphate</text>
        <dbReference type="Rhea" id="RHEA:22096"/>
        <dbReference type="Rhea" id="RHEA-COMP:14527"/>
        <dbReference type="Rhea" id="RHEA-COMP:17342"/>
        <dbReference type="ChEBI" id="CHEBI:43474"/>
        <dbReference type="ChEBI" id="CHEBI:57930"/>
        <dbReference type="ChEBI" id="CHEBI:140395"/>
        <dbReference type="EC" id="2.7.7.8"/>
    </reaction>
</comment>
<comment type="cofactor">
    <cofactor evidence="1">
        <name>Mg(2+)</name>
        <dbReference type="ChEBI" id="CHEBI:18420"/>
    </cofactor>
</comment>
<comment type="subcellular location">
    <subcellularLocation>
        <location evidence="1">Cytoplasm</location>
    </subcellularLocation>
</comment>
<comment type="similarity">
    <text evidence="1">Belongs to the polyribonucleotide nucleotidyltransferase family.</text>
</comment>
<reference key="1">
    <citation type="submission" date="2008-10" db="EMBL/GenBank/DDBJ databases">
        <title>Genome sequence of Bacillus cereus AH187.</title>
        <authorList>
            <person name="Dodson R.J."/>
            <person name="Durkin A.S."/>
            <person name="Rosovitz M.J."/>
            <person name="Rasko D.A."/>
            <person name="Kolsto A.B."/>
            <person name="Okstad O.A."/>
            <person name="Ravel J."/>
            <person name="Sutton G."/>
        </authorList>
    </citation>
    <scope>NUCLEOTIDE SEQUENCE [LARGE SCALE GENOMIC DNA]</scope>
    <source>
        <strain>AH187</strain>
    </source>
</reference>
<feature type="chain" id="PRO_1000147886" description="Polyribonucleotide nucleotidyltransferase">
    <location>
        <begin position="1"/>
        <end position="712"/>
    </location>
</feature>
<feature type="domain" description="KH" evidence="1">
    <location>
        <begin position="554"/>
        <end position="613"/>
    </location>
</feature>
<feature type="domain" description="S1 motif" evidence="1">
    <location>
        <begin position="623"/>
        <end position="691"/>
    </location>
</feature>
<feature type="binding site" evidence="1">
    <location>
        <position position="487"/>
    </location>
    <ligand>
        <name>Mg(2+)</name>
        <dbReference type="ChEBI" id="CHEBI:18420"/>
    </ligand>
</feature>
<feature type="binding site" evidence="1">
    <location>
        <position position="493"/>
    </location>
    <ligand>
        <name>Mg(2+)</name>
        <dbReference type="ChEBI" id="CHEBI:18420"/>
    </ligand>
</feature>
<accession>B7HLE0</accession>